<feature type="chain" id="PRO_0000086092" description="Calcium/calmodulin-dependent protein kinase type II subunit alpha">
    <location>
        <begin position="1"/>
        <end position="478"/>
    </location>
</feature>
<feature type="domain" description="Protein kinase" evidence="4">
    <location>
        <begin position="13"/>
        <end position="271"/>
    </location>
</feature>
<feature type="region of interest" description="Calmodulin-binding">
    <location>
        <begin position="290"/>
        <end position="300"/>
    </location>
</feature>
<feature type="region of interest" description="Interaction with BAALC" evidence="1">
    <location>
        <begin position="310"/>
        <end position="320"/>
    </location>
</feature>
<feature type="region of interest" description="Disordered" evidence="5">
    <location>
        <begin position="314"/>
        <end position="341"/>
    </location>
</feature>
<feature type="compositionally biased region" description="Basic and acidic residues" evidence="5">
    <location>
        <begin position="322"/>
        <end position="331"/>
    </location>
</feature>
<feature type="active site" description="Proton acceptor">
    <location>
        <position position="135"/>
    </location>
</feature>
<feature type="binding site" evidence="4">
    <location>
        <begin position="19"/>
        <end position="27"/>
    </location>
    <ligand>
        <name>ATP</name>
        <dbReference type="ChEBI" id="CHEBI:30616"/>
    </ligand>
</feature>
<feature type="binding site" evidence="4">
    <location>
        <position position="42"/>
    </location>
    <ligand>
        <name>ATP</name>
        <dbReference type="ChEBI" id="CHEBI:30616"/>
    </ligand>
</feature>
<feature type="modified residue" description="Phosphotyrosine" evidence="15">
    <location>
        <position position="13"/>
    </location>
</feature>
<feature type="modified residue" description="Phosphoserine" evidence="2">
    <location>
        <position position="257"/>
    </location>
</feature>
<feature type="modified residue" description="Phosphothreonine; by autocatalysis" evidence="9">
    <location>
        <position position="286"/>
    </location>
</feature>
<feature type="modified residue" description="Phosphoserine" evidence="16">
    <location>
        <position position="330"/>
    </location>
</feature>
<feature type="modified residue" description="Phosphoserine" evidence="16">
    <location>
        <position position="331"/>
    </location>
</feature>
<feature type="modified residue" description="Phosphoserine" evidence="16">
    <location>
        <position position="333"/>
    </location>
</feature>
<feature type="modified residue" description="Phosphothreonine" evidence="16">
    <location>
        <position position="336"/>
    </location>
</feature>
<feature type="modified residue" description="Phosphothreonine" evidence="16">
    <location>
        <position position="337"/>
    </location>
</feature>
<feature type="modified residue" description="Phosphoserine" evidence="16">
    <location>
        <position position="404"/>
    </location>
</feature>
<feature type="splice variant" id="VSP_004767" description="In isoform Alpha KAP." evidence="12">
    <location>
        <begin position="1"/>
        <end position="289"/>
    </location>
</feature>
<feature type="splice variant" id="VSP_004768" description="In isoform Alpha KAP." evidence="12">
    <original>LKKFNARRKLKGAILTTMLATRNFS</original>
    <variation>MLLFLTLWALVPCLVLLTLYFLSST</variation>
    <location>
        <begin position="290"/>
        <end position="314"/>
    </location>
</feature>
<feature type="splice variant" id="VSP_004769" description="In isoform Alpha KAP." evidence="12">
    <original>K</original>
    <variation>KKRKSSSSVQLM</variation>
    <location>
        <position position="328"/>
    </location>
</feature>
<feature type="mutagenesis site" description="Decreased protein abundance. Decreased autophosphorylation. Changed subcellular localization. Homozygous mice for that mutation are hyperactive and display repetitive behaviors. They also display social deficits and decreased exploratory behavior." evidence="9">
    <original>E</original>
    <variation>V</variation>
    <location>
        <position position="183"/>
    </location>
</feature>
<feature type="mutagenesis site" description="Abolishes autophosphorylation. Loss of FOXO3 activation. Reduces association with DAGLA. Enhances DAGLA enzymatic activity with an increase of 2-AG levels in dorsolateral striatal tissue of knockin mice. Inhibition of 2-AG breakdown using JZL-184 decreased locomotor activity in knockin mice." evidence="7 8">
    <original>T</original>
    <variation>A</variation>
    <location>
        <position position="286"/>
    </location>
</feature>
<feature type="mutagenesis site" description="Phosphomimetic mutant. Enhanced FOXO3 activation." evidence="8">
    <original>T</original>
    <variation>D</variation>
    <location>
        <position position="286"/>
    </location>
</feature>
<feature type="sequence conflict" description="In Ref. 1; CAA32946." evidence="13" ref="1">
    <original>A</original>
    <variation>P</variation>
    <location>
        <position position="40"/>
    </location>
</feature>
<feature type="sequence conflict" description="In Ref. 1; CAA32946." evidence="13" ref="1">
    <original>A</original>
    <variation>R</variation>
    <location>
        <position position="169"/>
    </location>
</feature>
<feature type="sequence conflict" description="In Ref. 1; CAA32946." evidence="13" ref="1">
    <original>G</original>
    <variation>R</variation>
    <location>
        <position position="228"/>
    </location>
</feature>
<feature type="helix" evidence="20">
    <location>
        <begin position="8"/>
        <end position="12"/>
    </location>
</feature>
<feature type="strand" evidence="20">
    <location>
        <begin position="13"/>
        <end position="21"/>
    </location>
</feature>
<feature type="strand" evidence="20">
    <location>
        <begin position="26"/>
        <end position="32"/>
    </location>
</feature>
<feature type="turn" evidence="20">
    <location>
        <begin position="33"/>
        <end position="36"/>
    </location>
</feature>
<feature type="strand" evidence="20">
    <location>
        <begin position="37"/>
        <end position="45"/>
    </location>
</feature>
<feature type="helix" evidence="20">
    <location>
        <begin position="51"/>
        <end position="66"/>
    </location>
</feature>
<feature type="strand" evidence="20">
    <location>
        <begin position="75"/>
        <end position="81"/>
    </location>
</feature>
<feature type="strand" evidence="20">
    <location>
        <begin position="84"/>
        <end position="89"/>
    </location>
</feature>
<feature type="helix" evidence="20">
    <location>
        <begin position="97"/>
        <end position="104"/>
    </location>
</feature>
<feature type="helix" evidence="20">
    <location>
        <begin position="109"/>
        <end position="128"/>
    </location>
</feature>
<feature type="helix" evidence="20">
    <location>
        <begin position="138"/>
        <end position="140"/>
    </location>
</feature>
<feature type="strand" evidence="20">
    <location>
        <begin position="141"/>
        <end position="144"/>
    </location>
</feature>
<feature type="strand" evidence="20">
    <location>
        <begin position="152"/>
        <end position="154"/>
    </location>
</feature>
<feature type="helix" evidence="20">
    <location>
        <begin position="177"/>
        <end position="179"/>
    </location>
</feature>
<feature type="helix" evidence="20">
    <location>
        <begin position="182"/>
        <end position="185"/>
    </location>
</feature>
<feature type="helix" evidence="20">
    <location>
        <begin position="193"/>
        <end position="208"/>
    </location>
</feature>
<feature type="helix" evidence="20">
    <location>
        <begin position="218"/>
        <end position="226"/>
    </location>
</feature>
<feature type="helix" evidence="20">
    <location>
        <begin position="236"/>
        <end position="239"/>
    </location>
</feature>
<feature type="helix" evidence="20">
    <location>
        <begin position="242"/>
        <end position="251"/>
    </location>
</feature>
<feature type="turn" evidence="20">
    <location>
        <begin position="256"/>
        <end position="258"/>
    </location>
</feature>
<feature type="helix" evidence="20">
    <location>
        <begin position="262"/>
        <end position="266"/>
    </location>
</feature>
<feature type="helix" evidence="20">
    <location>
        <begin position="269"/>
        <end position="272"/>
    </location>
</feature>
<feature type="helix" evidence="20">
    <location>
        <begin position="274"/>
        <end position="277"/>
    </location>
</feature>
<feature type="helix" evidence="19">
    <location>
        <begin position="295"/>
        <end position="309"/>
    </location>
</feature>
<feature type="strand" evidence="18">
    <location>
        <begin position="310"/>
        <end position="313"/>
    </location>
</feature>
<feature type="turn" evidence="17">
    <location>
        <begin position="338"/>
        <end position="340"/>
    </location>
</feature>
<feature type="helix" evidence="17">
    <location>
        <begin position="341"/>
        <end position="362"/>
    </location>
</feature>
<feature type="helix" evidence="17">
    <location>
        <begin position="366"/>
        <end position="372"/>
    </location>
</feature>
<feature type="strand" evidence="17">
    <location>
        <begin position="373"/>
        <end position="380"/>
    </location>
</feature>
<feature type="helix" evidence="17">
    <location>
        <begin position="382"/>
        <end position="384"/>
    </location>
</feature>
<feature type="strand" evidence="17">
    <location>
        <begin position="389"/>
        <end position="392"/>
    </location>
</feature>
<feature type="helix" evidence="17">
    <location>
        <begin position="393"/>
        <end position="400"/>
    </location>
</feature>
<feature type="helix" evidence="17">
    <location>
        <begin position="404"/>
        <end position="406"/>
    </location>
</feature>
<feature type="strand" evidence="17">
    <location>
        <begin position="410"/>
        <end position="421"/>
    </location>
</feature>
<feature type="strand" evidence="17">
    <location>
        <begin position="423"/>
        <end position="437"/>
    </location>
</feature>
<feature type="strand" evidence="17">
    <location>
        <begin position="445"/>
        <end position="458"/>
    </location>
</feature>
<feature type="strand" evidence="17">
    <location>
        <begin position="461"/>
        <end position="472"/>
    </location>
</feature>
<reference key="1">
    <citation type="journal article" date="1989" name="Nucleic Acids Res.">
        <title>Sequence of the cDNA for the alpha subunit of calmodulin kinase II from mouse brain.</title>
        <authorList>
            <person name="Hanley R.M."/>
            <person name="Payne M.E."/>
            <person name="Cruzalegui F."/>
            <person name="Christenson M.A."/>
            <person name="Means A.R."/>
        </authorList>
    </citation>
    <scope>NUCLEOTIDE SEQUENCE [MRNA]</scope>
    <source>
        <strain>ICR</strain>
        <tissue>Brain</tissue>
    </source>
</reference>
<reference key="2">
    <citation type="journal article" date="1996" name="Mol. Cell. Biol.">
        <title>An alternative, nonkinase product of the brain-specifically expressed Ca2+/calmodulin-dependent kinase II alpha isoform gene in skeletal muscle.</title>
        <authorList>
            <person name="Bayer K.-U."/>
            <person name="Loehler J."/>
            <person name="Harbers K."/>
        </authorList>
    </citation>
    <scope>NUCLEOTIDE SEQUENCE [MRNA] (ISOFORM ALPHA KAP)</scope>
    <scope>SUBCELLULAR LOCATION (ISOFORM ALPHA KAP)</scope>
    <scope>TISSUE SPECIFICITY</scope>
    <source>
        <strain>BALB/cJ</strain>
        <tissue>Skeletal muscle</tissue>
    </source>
</reference>
<reference key="3">
    <citation type="journal article" date="2005" name="Science">
        <title>The transcriptional landscape of the mammalian genome.</title>
        <authorList>
            <person name="Carninci P."/>
            <person name="Kasukawa T."/>
            <person name="Katayama S."/>
            <person name="Gough J."/>
            <person name="Frith M.C."/>
            <person name="Maeda N."/>
            <person name="Oyama R."/>
            <person name="Ravasi T."/>
            <person name="Lenhard B."/>
            <person name="Wells C."/>
            <person name="Kodzius R."/>
            <person name="Shimokawa K."/>
            <person name="Bajic V.B."/>
            <person name="Brenner S.E."/>
            <person name="Batalov S."/>
            <person name="Forrest A.R."/>
            <person name="Zavolan M."/>
            <person name="Davis M.J."/>
            <person name="Wilming L.G."/>
            <person name="Aidinis V."/>
            <person name="Allen J.E."/>
            <person name="Ambesi-Impiombato A."/>
            <person name="Apweiler R."/>
            <person name="Aturaliya R.N."/>
            <person name="Bailey T.L."/>
            <person name="Bansal M."/>
            <person name="Baxter L."/>
            <person name="Beisel K.W."/>
            <person name="Bersano T."/>
            <person name="Bono H."/>
            <person name="Chalk A.M."/>
            <person name="Chiu K.P."/>
            <person name="Choudhary V."/>
            <person name="Christoffels A."/>
            <person name="Clutterbuck D.R."/>
            <person name="Crowe M.L."/>
            <person name="Dalla E."/>
            <person name="Dalrymple B.P."/>
            <person name="de Bono B."/>
            <person name="Della Gatta G."/>
            <person name="di Bernardo D."/>
            <person name="Down T."/>
            <person name="Engstrom P."/>
            <person name="Fagiolini M."/>
            <person name="Faulkner G."/>
            <person name="Fletcher C.F."/>
            <person name="Fukushima T."/>
            <person name="Furuno M."/>
            <person name="Futaki S."/>
            <person name="Gariboldi M."/>
            <person name="Georgii-Hemming P."/>
            <person name="Gingeras T.R."/>
            <person name="Gojobori T."/>
            <person name="Green R.E."/>
            <person name="Gustincich S."/>
            <person name="Harbers M."/>
            <person name="Hayashi Y."/>
            <person name="Hensch T.K."/>
            <person name="Hirokawa N."/>
            <person name="Hill D."/>
            <person name="Huminiecki L."/>
            <person name="Iacono M."/>
            <person name="Ikeo K."/>
            <person name="Iwama A."/>
            <person name="Ishikawa T."/>
            <person name="Jakt M."/>
            <person name="Kanapin A."/>
            <person name="Katoh M."/>
            <person name="Kawasawa Y."/>
            <person name="Kelso J."/>
            <person name="Kitamura H."/>
            <person name="Kitano H."/>
            <person name="Kollias G."/>
            <person name="Krishnan S.P."/>
            <person name="Kruger A."/>
            <person name="Kummerfeld S.K."/>
            <person name="Kurochkin I.V."/>
            <person name="Lareau L.F."/>
            <person name="Lazarevic D."/>
            <person name="Lipovich L."/>
            <person name="Liu J."/>
            <person name="Liuni S."/>
            <person name="McWilliam S."/>
            <person name="Madan Babu M."/>
            <person name="Madera M."/>
            <person name="Marchionni L."/>
            <person name="Matsuda H."/>
            <person name="Matsuzawa S."/>
            <person name="Miki H."/>
            <person name="Mignone F."/>
            <person name="Miyake S."/>
            <person name="Morris K."/>
            <person name="Mottagui-Tabar S."/>
            <person name="Mulder N."/>
            <person name="Nakano N."/>
            <person name="Nakauchi H."/>
            <person name="Ng P."/>
            <person name="Nilsson R."/>
            <person name="Nishiguchi S."/>
            <person name="Nishikawa S."/>
            <person name="Nori F."/>
            <person name="Ohara O."/>
            <person name="Okazaki Y."/>
            <person name="Orlando V."/>
            <person name="Pang K.C."/>
            <person name="Pavan W.J."/>
            <person name="Pavesi G."/>
            <person name="Pesole G."/>
            <person name="Petrovsky N."/>
            <person name="Piazza S."/>
            <person name="Reed J."/>
            <person name="Reid J.F."/>
            <person name="Ring B.Z."/>
            <person name="Ringwald M."/>
            <person name="Rost B."/>
            <person name="Ruan Y."/>
            <person name="Salzberg S.L."/>
            <person name="Sandelin A."/>
            <person name="Schneider C."/>
            <person name="Schoenbach C."/>
            <person name="Sekiguchi K."/>
            <person name="Semple C.A."/>
            <person name="Seno S."/>
            <person name="Sessa L."/>
            <person name="Sheng Y."/>
            <person name="Shibata Y."/>
            <person name="Shimada H."/>
            <person name="Shimada K."/>
            <person name="Silva D."/>
            <person name="Sinclair B."/>
            <person name="Sperling S."/>
            <person name="Stupka E."/>
            <person name="Sugiura K."/>
            <person name="Sultana R."/>
            <person name="Takenaka Y."/>
            <person name="Taki K."/>
            <person name="Tammoja K."/>
            <person name="Tan S.L."/>
            <person name="Tang S."/>
            <person name="Taylor M.S."/>
            <person name="Tegner J."/>
            <person name="Teichmann S.A."/>
            <person name="Ueda H.R."/>
            <person name="van Nimwegen E."/>
            <person name="Verardo R."/>
            <person name="Wei C.L."/>
            <person name="Yagi K."/>
            <person name="Yamanishi H."/>
            <person name="Zabarovsky E."/>
            <person name="Zhu S."/>
            <person name="Zimmer A."/>
            <person name="Hide W."/>
            <person name="Bult C."/>
            <person name="Grimmond S.M."/>
            <person name="Teasdale R.D."/>
            <person name="Liu E.T."/>
            <person name="Brusic V."/>
            <person name="Quackenbush J."/>
            <person name="Wahlestedt C."/>
            <person name="Mattick J.S."/>
            <person name="Hume D.A."/>
            <person name="Kai C."/>
            <person name="Sasaki D."/>
            <person name="Tomaru Y."/>
            <person name="Fukuda S."/>
            <person name="Kanamori-Katayama M."/>
            <person name="Suzuki M."/>
            <person name="Aoki J."/>
            <person name="Arakawa T."/>
            <person name="Iida J."/>
            <person name="Imamura K."/>
            <person name="Itoh M."/>
            <person name="Kato T."/>
            <person name="Kawaji H."/>
            <person name="Kawagashira N."/>
            <person name="Kawashima T."/>
            <person name="Kojima M."/>
            <person name="Kondo S."/>
            <person name="Konno H."/>
            <person name="Nakano K."/>
            <person name="Ninomiya N."/>
            <person name="Nishio T."/>
            <person name="Okada M."/>
            <person name="Plessy C."/>
            <person name="Shibata K."/>
            <person name="Shiraki T."/>
            <person name="Suzuki S."/>
            <person name="Tagami M."/>
            <person name="Waki K."/>
            <person name="Watahiki A."/>
            <person name="Okamura-Oho Y."/>
            <person name="Suzuki H."/>
            <person name="Kawai J."/>
            <person name="Hayashizaki Y."/>
        </authorList>
    </citation>
    <scope>NUCLEOTIDE SEQUENCE [LARGE SCALE MRNA]</scope>
    <source>
        <strain>C57BL/6J</strain>
        <tissue>Hippocampus</tissue>
    </source>
</reference>
<reference key="4">
    <citation type="journal article" date="2004" name="Genome Res.">
        <title>The status, quality, and expansion of the NIH full-length cDNA project: the Mammalian Gene Collection (MGC).</title>
        <authorList>
            <consortium name="The MGC Project Team"/>
        </authorList>
    </citation>
    <scope>NUCLEOTIDE SEQUENCE [LARGE SCALE MRNA]</scope>
    <source>
        <tissue>Eye</tissue>
    </source>
</reference>
<reference key="5">
    <citation type="submission" date="2009-01" db="UniProtKB">
        <authorList>
            <person name="Lubec G."/>
            <person name="Sunyer B."/>
            <person name="Chen W.-Q."/>
        </authorList>
    </citation>
    <scope>PROTEIN SEQUENCE OF 9-21; 33-42; 135-146; 260-267; 301-311; 329-344; 353-371; 397-405; 434-445 AND 470-478</scope>
    <scope>IDENTIFICATION BY MASS SPECTROMETRY</scope>
    <source>
        <strain>OF1</strain>
        <tissue>Hippocampus</tissue>
    </source>
</reference>
<reference key="6">
    <citation type="journal article" date="2005" name="Science">
        <title>Variable control of Ets-1 DNA binding by multiple phosphates in an unstructured region.</title>
        <authorList>
            <person name="Pufall M.A."/>
            <person name="Lee G.M."/>
            <person name="Nelson M.L."/>
            <person name="Kang H.S."/>
            <person name="Velyvis A."/>
            <person name="Kay L.E."/>
            <person name="McIntosh L.P."/>
            <person name="Graves B.J."/>
        </authorList>
    </citation>
    <scope>FUNCTION</scope>
    <scope>CATALYTIC ACTIVITY</scope>
</reference>
<reference key="7">
    <citation type="journal article" date="2006" name="Mol. Cell. Proteomics">
        <title>Comprehensive identification of phosphorylation sites in postsynaptic density preparations.</title>
        <authorList>
            <person name="Trinidad J.C."/>
            <person name="Specht C.G."/>
            <person name="Thalhammer A."/>
            <person name="Schoepfer R."/>
            <person name="Burlingame A.L."/>
        </authorList>
    </citation>
    <scope>IDENTIFICATION BY MASS SPECTROMETRY [LARGE SCALE ANALYSIS]</scope>
    <source>
        <tissue>Brain</tissue>
    </source>
</reference>
<reference key="8">
    <citation type="journal article" date="2008" name="J. Proteome Res.">
        <title>Large-scale identification and evolution indexing of tyrosine phosphorylation sites from murine brain.</title>
        <authorList>
            <person name="Ballif B.A."/>
            <person name="Carey G.R."/>
            <person name="Sunyaev S.R."/>
            <person name="Gygi S.P."/>
        </authorList>
    </citation>
    <scope>PHOSPHORYLATION [LARGE SCALE ANALYSIS] AT TYR-13</scope>
    <scope>IDENTIFICATION BY MASS SPECTROMETRY [LARGE SCALE ANALYSIS]</scope>
    <source>
        <tissue>Brain</tissue>
    </source>
</reference>
<reference key="9">
    <citation type="journal article" date="2010" name="Cell">
        <title>A tissue-specific atlas of mouse protein phosphorylation and expression.</title>
        <authorList>
            <person name="Huttlin E.L."/>
            <person name="Jedrychowski M.P."/>
            <person name="Elias J.E."/>
            <person name="Goswami T."/>
            <person name="Rad R."/>
            <person name="Beausoleil S.A."/>
            <person name="Villen J."/>
            <person name="Haas W."/>
            <person name="Sowa M.E."/>
            <person name="Gygi S.P."/>
        </authorList>
    </citation>
    <scope>PHOSPHORYLATION [LARGE SCALE ANALYSIS] AT SER-330; SER-331; SER-333; THR-336; THR-337 AND SER-404</scope>
    <scope>IDENTIFICATION BY MASS SPECTROMETRY [LARGE SCALE ANALYSIS]</scope>
    <source>
        <tissue>Brain</tissue>
        <tissue>Heart</tissue>
        <tissue>Lung</tissue>
        <tissue>Spleen</tissue>
    </source>
</reference>
<reference key="10">
    <citation type="journal article" date="2013" name="Elife">
        <title>CAMKII and Calcineurin regulate the lifespan of Caenorhabditis elegans through the FOXO transcription factor DAF-16.</title>
        <authorList>
            <person name="Tao L."/>
            <person name="Xie Q."/>
            <person name="Ding Y.H."/>
            <person name="Li S.T."/>
            <person name="Peng S."/>
            <person name="Zhang Y.P."/>
            <person name="Tan D."/>
            <person name="Yuan Z."/>
            <person name="Dong M.Q."/>
        </authorList>
    </citation>
    <scope>FUNCTION</scope>
    <scope>MUTAGENESIS OF THR-286</scope>
</reference>
<reference key="11">
    <citation type="journal article" date="2013" name="Nat. Neurosci.">
        <title>CaMKII regulates diacylglycerol lipase-alpha and striatal endocannabinoid signaling.</title>
        <authorList>
            <person name="Shonesy B.C."/>
            <person name="Wang X."/>
            <person name="Rose K.L."/>
            <person name="Ramikie T.S."/>
            <person name="Cavener V.S."/>
            <person name="Rentz T."/>
            <person name="Baucum A.J. II"/>
            <person name="Jalan-Sakrikar N."/>
            <person name="Mackie K."/>
            <person name="Winder D.G."/>
            <person name="Patel S."/>
            <person name="Colbran R.J."/>
        </authorList>
    </citation>
    <scope>FUNCTION</scope>
    <scope>CATALYTIC ACTIVITY</scope>
    <scope>INTERACTION WITH DAGLA</scope>
    <scope>MUTAGENESIS OF THR-286</scope>
</reference>
<reference key="12">
    <citation type="journal article" date="2017" name="J. Neurosci.">
        <title>Mutation Disrupts Dendritic Morphology and Synaptic Transmission, and Causes ASD-Related Behaviors.</title>
        <authorList>
            <person name="Stephenson J.R."/>
            <person name="Wang X."/>
            <person name="Perfitt T.L."/>
            <person name="Parrish W.P."/>
            <person name="Shonesy B.C."/>
            <person name="Marks C.R."/>
            <person name="Mortlock D.P."/>
            <person name="Nakagawa T."/>
            <person name="Sutcliffe J.S."/>
            <person name="Colbran R.J."/>
        </authorList>
    </citation>
    <scope>PHOSPHORYLATION AT THR-286</scope>
    <scope>MUTAGENESIS OF GLU-183</scope>
</reference>
<reference key="13">
    <citation type="journal article" date="2017" name="Sci. Rep.">
        <title>Prevention of long-term memory loss after retrieval by an endogenous CaMKII inhibitor.</title>
        <authorList>
            <person name="Vigil F.A."/>
            <person name="Mizuno K."/>
            <person name="Lucchesi W."/>
            <person name="Valls-Comamala V."/>
            <person name="Giese K.P."/>
        </authorList>
    </citation>
    <scope>SUBCELLULAR LOCATION</scope>
</reference>
<organism>
    <name type="scientific">Mus musculus</name>
    <name type="common">Mouse</name>
    <dbReference type="NCBI Taxonomy" id="10090"/>
    <lineage>
        <taxon>Eukaryota</taxon>
        <taxon>Metazoa</taxon>
        <taxon>Chordata</taxon>
        <taxon>Craniata</taxon>
        <taxon>Vertebrata</taxon>
        <taxon>Euteleostomi</taxon>
        <taxon>Mammalia</taxon>
        <taxon>Eutheria</taxon>
        <taxon>Euarchontoglires</taxon>
        <taxon>Glires</taxon>
        <taxon>Rodentia</taxon>
        <taxon>Myomorpha</taxon>
        <taxon>Muroidea</taxon>
        <taxon>Muridae</taxon>
        <taxon>Murinae</taxon>
        <taxon>Mus</taxon>
        <taxon>Mus</taxon>
    </lineage>
</organism>
<evidence type="ECO:0000250" key="1"/>
<evidence type="ECO:0000250" key="2">
    <source>
        <dbReference type="UniProtKB" id="P11275"/>
    </source>
</evidence>
<evidence type="ECO:0000250" key="3">
    <source>
        <dbReference type="UniProtKB" id="Q9UQM7"/>
    </source>
</evidence>
<evidence type="ECO:0000255" key="4">
    <source>
        <dbReference type="PROSITE-ProRule" id="PRU00159"/>
    </source>
</evidence>
<evidence type="ECO:0000256" key="5">
    <source>
        <dbReference type="SAM" id="MobiDB-lite"/>
    </source>
</evidence>
<evidence type="ECO:0000269" key="6">
    <source>
    </source>
</evidence>
<evidence type="ECO:0000269" key="7">
    <source>
    </source>
</evidence>
<evidence type="ECO:0000269" key="8">
    <source>
    </source>
</evidence>
<evidence type="ECO:0000269" key="9">
    <source>
    </source>
</evidence>
<evidence type="ECO:0000269" key="10">
    <source>
    </source>
</evidence>
<evidence type="ECO:0000269" key="11">
    <source>
    </source>
</evidence>
<evidence type="ECO:0000303" key="12">
    <source>
    </source>
</evidence>
<evidence type="ECO:0000305" key="13"/>
<evidence type="ECO:0000305" key="14">
    <source>
    </source>
</evidence>
<evidence type="ECO:0007744" key="15">
    <source>
    </source>
</evidence>
<evidence type="ECO:0007744" key="16">
    <source>
    </source>
</evidence>
<evidence type="ECO:0007829" key="17">
    <source>
        <dbReference type="PDB" id="1HKX"/>
    </source>
</evidence>
<evidence type="ECO:0007829" key="18">
    <source>
        <dbReference type="PDB" id="4X3I"/>
    </source>
</evidence>
<evidence type="ECO:0007829" key="19">
    <source>
        <dbReference type="PDB" id="6TS3"/>
    </source>
</evidence>
<evidence type="ECO:0007829" key="20">
    <source>
        <dbReference type="PDB" id="7B56"/>
    </source>
</evidence>
<accession>P11798</accession>
<accession>Q61284</accession>
<accession>Q6ZWN4</accession>
<proteinExistence type="evidence at protein level"/>
<sequence>MATITCTRFTEEYQLFEELGKGAFSVVRRCVKVLAGQEYAAKIINTKKLSARDHQKLEREARICRLLKHPNIVRLHDSISEEGHHYLIFDLVTGGELFEDIVAREYYSEADASHCIQQILEAVLHCHQMGVVHRDLKPENLLLASKLKGAAVKLADFGLAIEVEGEQQAWFGFAGTPGYLSPEVLRKDPYGKPVDLWACGVILYILLVGYPPFWDEDQHRLYQQIKAGAYDFPSPEWDTVTPEAKDLINKMLTINPSKRITAAEALKHPWISHRSTVASCMHRQETVDCLKKFNARRKLKGAILTTMLATRNFSGGKSGGNKKNDGVKESSESTNTTIEDEDTKVRKQEIIKVTEQLIEAISNGDFESYTKMCDPGMTAFEPEALGNLVEGLDFHRFYFENLWSRNSKPVHTTILNPHIHLMGDESACIAYIRITQYLDAGGIPRTAQSEETRVWHRRDGKWQIVHFHRSGAPSVLPH</sequence>
<keyword id="KW-0002">3D-structure</keyword>
<keyword id="KW-0025">Alternative splicing</keyword>
<keyword id="KW-0067">ATP-binding</keyword>
<keyword id="KW-0112">Calmodulin-binding</keyword>
<keyword id="KW-0966">Cell projection</keyword>
<keyword id="KW-0963">Cytoplasm</keyword>
<keyword id="KW-0903">Direct protein sequencing</keyword>
<keyword id="KW-0418">Kinase</keyword>
<keyword id="KW-0449">Lipoprotein</keyword>
<keyword id="KW-0460">Magnesium</keyword>
<keyword id="KW-0479">Metal-binding</keyword>
<keyword id="KW-0547">Nucleotide-binding</keyword>
<keyword id="KW-0564">Palmitate</keyword>
<keyword id="KW-0597">Phosphoprotein</keyword>
<keyword id="KW-1185">Reference proteome</keyword>
<keyword id="KW-0723">Serine/threonine-protein kinase</keyword>
<keyword id="KW-0770">Synapse</keyword>
<keyword id="KW-0808">Transferase</keyword>
<comment type="function">
    <text evidence="2 3 6 7 8">Calcium/calmodulin-dependent protein kinase that functions autonomously after Ca(2+)/calmodulin-binding and autophosphorylation, and is involved in various processes, such as synaptic plasticity, neurotransmitter release and long-term potentiation (By similarity). Member of the NMDAR signaling complex in excitatory synapses, it regulates NMDAR-dependent potentiation of the AMPAR and therefore excitatory synaptic transmission (By similarity). Regulates dendritic spine development (By similarity). Also regulates the migration of developing neurons (By similarity). Phosphorylates the transcription factor FOXO3 to activate its transcriptional activity (PubMed:23805378). Phosphorylates the transcription factor ETS1 in response to calcium signaling, thereby decreasing ETS1 affinity for DNA (PubMed:15994560). In response to interferon-gamma (IFN-gamma) stimulation, catalyzes phosphorylation of STAT1, stimulating the JAK-STAT signaling pathway (By similarity). In response to interferon-beta (IFN-beta) stimulation, stimulates the JAK-STAT signaling pathway (By similarity). Acts as a negative regulator of 2-arachidonoylglycerol (2-AG)-mediated synaptic signaling via modulation of DAGLA activity (PubMed:23502535).</text>
</comment>
<comment type="function">
    <molecule>Isoform Alpha KAP</molecule>
    <text evidence="11">Has no kinase activity.</text>
</comment>
<comment type="catalytic activity">
    <reaction evidence="6 7">
        <text>L-seryl-[protein] + ATP = O-phospho-L-seryl-[protein] + ADP + H(+)</text>
        <dbReference type="Rhea" id="RHEA:17989"/>
        <dbReference type="Rhea" id="RHEA-COMP:9863"/>
        <dbReference type="Rhea" id="RHEA-COMP:11604"/>
        <dbReference type="ChEBI" id="CHEBI:15378"/>
        <dbReference type="ChEBI" id="CHEBI:29999"/>
        <dbReference type="ChEBI" id="CHEBI:30616"/>
        <dbReference type="ChEBI" id="CHEBI:83421"/>
        <dbReference type="ChEBI" id="CHEBI:456216"/>
        <dbReference type="EC" id="2.7.11.17"/>
    </reaction>
</comment>
<comment type="catalytic activity">
    <reaction evidence="7">
        <text>L-threonyl-[protein] + ATP = O-phospho-L-threonyl-[protein] + ADP + H(+)</text>
        <dbReference type="Rhea" id="RHEA:46608"/>
        <dbReference type="Rhea" id="RHEA-COMP:11060"/>
        <dbReference type="Rhea" id="RHEA-COMP:11605"/>
        <dbReference type="ChEBI" id="CHEBI:15378"/>
        <dbReference type="ChEBI" id="CHEBI:30013"/>
        <dbReference type="ChEBI" id="CHEBI:30616"/>
        <dbReference type="ChEBI" id="CHEBI:61977"/>
        <dbReference type="ChEBI" id="CHEBI:456216"/>
        <dbReference type="EC" id="2.7.11.17"/>
    </reaction>
</comment>
<comment type="cofactor">
    <cofactor evidence="3">
        <name>Mg(2+)</name>
        <dbReference type="ChEBI" id="CHEBI:18420"/>
    </cofactor>
</comment>
<comment type="activity regulation">
    <text evidence="3">Activated by Ca(2+)/calmodulin. Binding of calmodulin results in conformational change that relieves intrasteric autoinhibition and allows autophosphorylation of Thr-286 which turns the kinase in a constitutively active form and confers to the kinase a Ca(2+)-independent activity.</text>
</comment>
<comment type="subunit">
    <text evidence="2 3 7">There are 4 genes encoding calcium/calmodulin-dependent protein kinase type II chains: CAMK2A, CAMK2B, CAMK2G and CAMK2D. The corresponding proteins assemble into homo- or heteromultimeric holoenzymes composed of 12 subunits with two hexameric rings stacked one on top of the other (By similarity). Interacts with BAALC. Interacts with MPDZ. Interacts with SYN1. Interacts with CAMK2N2. Interacts with SYNGAP1. Interacts with SYNPO2 (By similarity). Interacts with SHANK3. Interacts with GRIN2B. Interacts with CACNB2. Interacts with LRRC7. Interacts with GRM5 (By similarity). Interacts with DAGLA (via C-terminal); this interaction is enhanced by autophosphorylation of CAMK2A at Thr-286 (PubMed:23502535). Interacts with CAMK2N1; this interaction requires CAMK2A activation by Ca(2+) (By similarity).</text>
</comment>
<comment type="interaction">
    <interactant intactId="EBI-400384">
        <id>P11798</id>
    </interactant>
    <interactant intactId="EBI-299169">
        <id>Q9JI91</id>
        <label>Actn2</label>
    </interactant>
    <organismsDiffer>false</organismsDiffer>
    <experiments>3</experiments>
</comment>
<comment type="interaction">
    <interactant intactId="EBI-400384">
        <id>P11798</id>
    </interactant>
    <interactant intactId="EBI-300895">
        <id>Q62108</id>
        <label>Dlg4</label>
    </interactant>
    <organismsDiffer>false</organismsDiffer>
    <experiments>4</experiments>
</comment>
<comment type="interaction">
    <interactant intactId="EBI-400384">
        <id>P11798</id>
    </interactant>
    <interactant intactId="EBI-400125">
        <id>Q01097</id>
        <label>Grin2b</label>
    </interactant>
    <organismsDiffer>false</organismsDiffer>
    <experiments>5</experiments>
</comment>
<comment type="interaction">
    <interactant intactId="EBI-400384">
        <id>P11798</id>
    </interactant>
    <interactant intactId="EBI-396905">
        <id>Q00960</id>
        <label>Grin2b</label>
    </interactant>
    <organismsDiffer>true</organismsDiffer>
    <experiments>4</experiments>
</comment>
<comment type="interaction">
    <interactant intactId="EBI-400384">
        <id>P11798</id>
    </interactant>
    <interactant intactId="EBI-7798464">
        <id>P70587</id>
        <label>Lrrc7</label>
    </interactant>
    <organismsDiffer>true</organismsDiffer>
    <experiments>2</experiments>
</comment>
<comment type="interaction">
    <interactant intactId="EBI-400402">
        <id>P11798-2</id>
    </interactant>
    <interactant intactId="EBI-644645">
        <id>Q9Z1R2</id>
        <label>Bag6</label>
    </interactant>
    <organismsDiffer>false</organismsDiffer>
    <experiments>3</experiments>
</comment>
<comment type="subcellular location">
    <molecule>Isoform Alpha KAP</molecule>
    <subcellularLocation>
        <location evidence="14">Cytoplasm</location>
    </subcellularLocation>
</comment>
<comment type="subcellular location">
    <subcellularLocation>
        <location evidence="10">Synapse</location>
    </subcellularLocation>
    <subcellularLocation>
        <location evidence="2">Postsynaptic density</location>
    </subcellularLocation>
    <subcellularLocation>
        <location evidence="3">Cell projection</location>
        <location evidence="3">Dendritic spine</location>
    </subcellularLocation>
    <subcellularLocation>
        <location evidence="3">Cell projection</location>
        <location evidence="3">Dendrite</location>
    </subcellularLocation>
    <text evidence="2">Postsynaptic lipid rafts.</text>
</comment>
<comment type="alternative products">
    <event type="alternative splicing"/>
    <isoform>
        <id>P11798-1</id>
        <name>Alpha CaMKII</name>
        <sequence type="displayed"/>
    </isoform>
    <isoform>
        <id>P11798-2</id>
        <name evidence="12">Alpha KAP</name>
        <sequence type="described" ref="VSP_004767 VSP_004768 VSP_004769"/>
    </isoform>
</comment>
<comment type="tissue specificity">
    <molecule>Isoform Alpha CaMKII</molecule>
    <text evidence="11">Expressed in brain.</text>
</comment>
<comment type="tissue specificity">
    <molecule>Isoform Alpha KAP</molecule>
    <text evidence="11">Expressed in skeletal muscle.</text>
</comment>
<comment type="PTM">
    <text evidence="9">Autophosphorylation of Thr-286 following activation by Ca(2+)/calmodulin. Phosphorylation of Thr-286 locks the kinase into an activated state.</text>
</comment>
<comment type="PTM">
    <text evidence="2">Palmitoylated. Probably palmitoylated by ZDHHC3 and ZDHHC7.</text>
</comment>
<comment type="similarity">
    <text evidence="13">Belongs to the protein kinase superfamily. CAMK Ser/Thr protein kinase family. CaMK subfamily.</text>
</comment>
<protein>
    <recommendedName>
        <fullName>Calcium/calmodulin-dependent protein kinase type II subunit alpha</fullName>
        <shortName>CaM kinase II subunit alpha</shortName>
        <shortName>CaMK-II subunit alpha</shortName>
        <ecNumber evidence="7">2.7.11.17</ecNumber>
    </recommendedName>
</protein>
<name>KCC2A_MOUSE</name>
<dbReference type="EC" id="2.7.11.17" evidence="7"/>
<dbReference type="EMBL" id="X14836">
    <property type="protein sequence ID" value="CAA32946.1"/>
    <property type="molecule type" value="mRNA"/>
</dbReference>
<dbReference type="EMBL" id="X87142">
    <property type="protein sequence ID" value="CAA60620.1"/>
    <property type="molecule type" value="mRNA"/>
</dbReference>
<dbReference type="EMBL" id="AK083245">
    <property type="protein sequence ID" value="BAC38829.1"/>
    <property type="molecule type" value="mRNA"/>
</dbReference>
<dbReference type="EMBL" id="BC031745">
    <property type="protein sequence ID" value="AAH31745.1"/>
    <property type="molecule type" value="mRNA"/>
</dbReference>
<dbReference type="CCDS" id="CCDS29276.1">
    <molecule id="P11798-1"/>
</dbReference>
<dbReference type="CCDS" id="CCDS29277.1">
    <molecule id="P11798-2"/>
</dbReference>
<dbReference type="PIR" id="JC6083">
    <property type="entry name" value="JC6083"/>
</dbReference>
<dbReference type="PIR" id="S04365">
    <property type="entry name" value="S04365"/>
</dbReference>
<dbReference type="RefSeq" id="NP_001273738.1">
    <property type="nucleotide sequence ID" value="NM_001286809.1"/>
</dbReference>
<dbReference type="RefSeq" id="NP_033922.1">
    <molecule id="P11798-2"/>
    <property type="nucleotide sequence ID" value="NM_009792.3"/>
</dbReference>
<dbReference type="RefSeq" id="NP_803126.1">
    <molecule id="P11798-1"/>
    <property type="nucleotide sequence ID" value="NM_177407.4"/>
</dbReference>
<dbReference type="PDB" id="1HKX">
    <property type="method" value="X-ray"/>
    <property type="resolution" value="2.65 A"/>
    <property type="chains" value="A/B/C/D/E/F/G/H/I/J/K/L/M/N=336-478"/>
</dbReference>
<dbReference type="PDB" id="4X3I">
    <property type="method" value="X-ray"/>
    <property type="resolution" value="1.80 A"/>
    <property type="chains" value="B=309-315"/>
</dbReference>
<dbReference type="PDB" id="6TS3">
    <property type="method" value="X-ray"/>
    <property type="resolution" value="1.28 A"/>
    <property type="chains" value="C/D=294-315"/>
</dbReference>
<dbReference type="PDB" id="7B55">
    <property type="method" value="X-ray"/>
    <property type="resolution" value="1.60 A"/>
    <property type="chains" value="B=1-315"/>
</dbReference>
<dbReference type="PDB" id="7B56">
    <property type="method" value="X-ray"/>
    <property type="resolution" value="1.45 A"/>
    <property type="chains" value="B=1-315"/>
</dbReference>
<dbReference type="PDB" id="7B57">
    <property type="method" value="X-ray"/>
    <property type="resolution" value="1.95 A"/>
    <property type="chains" value="B=1-315"/>
</dbReference>
<dbReference type="PDBsum" id="1HKX"/>
<dbReference type="PDBsum" id="4X3I"/>
<dbReference type="PDBsum" id="6TS3"/>
<dbReference type="PDBsum" id="7B55"/>
<dbReference type="PDBsum" id="7B56"/>
<dbReference type="PDBsum" id="7B57"/>
<dbReference type="SMR" id="P11798"/>
<dbReference type="BioGRID" id="198461">
    <property type="interactions" value="44"/>
</dbReference>
<dbReference type="CORUM" id="P11798"/>
<dbReference type="DIP" id="DIP-31593N"/>
<dbReference type="FunCoup" id="P11798">
    <property type="interactions" value="2413"/>
</dbReference>
<dbReference type="IntAct" id="P11798">
    <property type="interactions" value="51"/>
</dbReference>
<dbReference type="MINT" id="P11798"/>
<dbReference type="STRING" id="10090.ENSMUSP00000099952"/>
<dbReference type="GuidetoPHARMACOLOGY" id="1555"/>
<dbReference type="GlyGen" id="P11798">
    <property type="glycosylation" value="6 sites, 1 N-linked glycan (1 site), 1 O-linked glycan (4 sites)"/>
</dbReference>
<dbReference type="iPTMnet" id="P11798"/>
<dbReference type="MetOSite" id="P11798"/>
<dbReference type="PhosphoSitePlus" id="P11798"/>
<dbReference type="SwissPalm" id="P11798"/>
<dbReference type="jPOST" id="P11798"/>
<dbReference type="PaxDb" id="10090-ENSMUSP00000099952"/>
<dbReference type="PeptideAtlas" id="P11798"/>
<dbReference type="ProteomicsDB" id="263582">
    <molecule id="P11798-1"/>
</dbReference>
<dbReference type="ProteomicsDB" id="263583">
    <molecule id="P11798-2"/>
</dbReference>
<dbReference type="Antibodypedia" id="3814">
    <property type="antibodies" value="867 antibodies from 51 providers"/>
</dbReference>
<dbReference type="DNASU" id="12322"/>
<dbReference type="Ensembl" id="ENSMUST00000102888.10">
    <molecule id="P11798-1"/>
    <property type="protein sequence ID" value="ENSMUSP00000099952.4"/>
    <property type="gene ID" value="ENSMUSG00000024617.17"/>
</dbReference>
<dbReference type="Ensembl" id="ENSMUST00000115295.9">
    <molecule id="P11798-2"/>
    <property type="protein sequence ID" value="ENSMUSP00000110950.3"/>
    <property type="gene ID" value="ENSMUSG00000024617.17"/>
</dbReference>
<dbReference type="GeneID" id="12322"/>
<dbReference type="KEGG" id="mmu:12322"/>
<dbReference type="UCSC" id="uc008fbg.2">
    <molecule id="P11798-1"/>
    <property type="organism name" value="mouse"/>
</dbReference>
<dbReference type="UCSC" id="uc008fbh.2">
    <molecule id="P11798-2"/>
    <property type="organism name" value="mouse"/>
</dbReference>
<dbReference type="AGR" id="MGI:88256"/>
<dbReference type="CTD" id="815"/>
<dbReference type="MGI" id="MGI:88256">
    <property type="gene designation" value="Camk2a"/>
</dbReference>
<dbReference type="VEuPathDB" id="HostDB:ENSMUSG00000024617"/>
<dbReference type="eggNOG" id="KOG0033">
    <property type="taxonomic scope" value="Eukaryota"/>
</dbReference>
<dbReference type="GeneTree" id="ENSGT00940000155150"/>
<dbReference type="HOGENOM" id="CLU_000288_71_0_1"/>
<dbReference type="InParanoid" id="P11798"/>
<dbReference type="OMA" id="YFENCEF"/>
<dbReference type="OrthoDB" id="92711at9989"/>
<dbReference type="TreeFam" id="TF315229"/>
<dbReference type="BRENDA" id="2.7.11.17">
    <property type="organism ID" value="3474"/>
</dbReference>
<dbReference type="Reactome" id="R-MMU-3371571">
    <property type="pathway name" value="HSF1-dependent transactivation"/>
</dbReference>
<dbReference type="Reactome" id="R-MMU-399719">
    <property type="pathway name" value="Trafficking of AMPA receptors"/>
</dbReference>
<dbReference type="Reactome" id="R-MMU-4086398">
    <property type="pathway name" value="Ca2+ pathway"/>
</dbReference>
<dbReference type="Reactome" id="R-MMU-438066">
    <property type="pathway name" value="Unblocking of NMDA receptors, glutamate binding and activation"/>
</dbReference>
<dbReference type="Reactome" id="R-MMU-5578775">
    <property type="pathway name" value="Ion homeostasis"/>
</dbReference>
<dbReference type="Reactome" id="R-MMU-5673000">
    <property type="pathway name" value="RAF activation"/>
</dbReference>
<dbReference type="Reactome" id="R-MMU-5673001">
    <property type="pathway name" value="RAF/MAP kinase cascade"/>
</dbReference>
<dbReference type="Reactome" id="R-MMU-877300">
    <property type="pathway name" value="Interferon gamma signaling"/>
</dbReference>
<dbReference type="Reactome" id="R-MMU-936837">
    <property type="pathway name" value="Ion transport by P-type ATPases"/>
</dbReference>
<dbReference type="BioGRID-ORCS" id="12322">
    <property type="hits" value="2 hits in 79 CRISPR screens"/>
</dbReference>
<dbReference type="CD-CODE" id="CE726F99">
    <property type="entry name" value="Postsynaptic density"/>
</dbReference>
<dbReference type="ChiTaRS" id="Camk2a">
    <property type="organism name" value="mouse"/>
</dbReference>
<dbReference type="EvolutionaryTrace" id="P11798"/>
<dbReference type="PRO" id="PR:P11798"/>
<dbReference type="Proteomes" id="UP000000589">
    <property type="component" value="Chromosome 18"/>
</dbReference>
<dbReference type="RNAct" id="P11798">
    <property type="molecule type" value="protein"/>
</dbReference>
<dbReference type="Bgee" id="ENSMUSG00000024617">
    <property type="expression patterns" value="Expressed in dentate gyrus of hippocampal formation granule cell and 175 other cell types or tissues"/>
</dbReference>
<dbReference type="ExpressionAtlas" id="P11798">
    <property type="expression patterns" value="baseline and differential"/>
</dbReference>
<dbReference type="GO" id="GO:0005954">
    <property type="term" value="C:calcium- and calmodulin-dependent protein kinase complex"/>
    <property type="evidence" value="ECO:0000250"/>
    <property type="project" value="UniProtKB"/>
</dbReference>
<dbReference type="GO" id="GO:0043197">
    <property type="term" value="C:dendritic spine"/>
    <property type="evidence" value="ECO:0000250"/>
    <property type="project" value="UniProtKB"/>
</dbReference>
<dbReference type="GO" id="GO:0005739">
    <property type="term" value="C:mitochondrion"/>
    <property type="evidence" value="ECO:0000314"/>
    <property type="project" value="BHF-UCL"/>
</dbReference>
<dbReference type="GO" id="GO:0014069">
    <property type="term" value="C:postsynaptic density"/>
    <property type="evidence" value="ECO:0000314"/>
    <property type="project" value="MGI"/>
</dbReference>
<dbReference type="GO" id="GO:0098685">
    <property type="term" value="C:Schaffer collateral - CA1 synapse"/>
    <property type="evidence" value="ECO:0000314"/>
    <property type="project" value="SynGO"/>
</dbReference>
<dbReference type="GO" id="GO:0045202">
    <property type="term" value="C:synapse"/>
    <property type="evidence" value="ECO:0000314"/>
    <property type="project" value="UniProtKB"/>
</dbReference>
<dbReference type="GO" id="GO:0005524">
    <property type="term" value="F:ATP binding"/>
    <property type="evidence" value="ECO:0007669"/>
    <property type="project" value="UniProtKB-KW"/>
</dbReference>
<dbReference type="GO" id="GO:0004683">
    <property type="term" value="F:calcium/calmodulin-dependent protein kinase activity"/>
    <property type="evidence" value="ECO:0000314"/>
    <property type="project" value="CAFA"/>
</dbReference>
<dbReference type="GO" id="GO:0005516">
    <property type="term" value="F:calmodulin binding"/>
    <property type="evidence" value="ECO:0000314"/>
    <property type="project" value="CAFA"/>
</dbReference>
<dbReference type="GO" id="GO:0035254">
    <property type="term" value="F:glutamate receptor binding"/>
    <property type="evidence" value="ECO:0000353"/>
    <property type="project" value="MGI"/>
</dbReference>
<dbReference type="GO" id="GO:0046872">
    <property type="term" value="F:metal ion binding"/>
    <property type="evidence" value="ECO:0007669"/>
    <property type="project" value="UniProtKB-KW"/>
</dbReference>
<dbReference type="GO" id="GO:0106310">
    <property type="term" value="F:protein serine kinase activity"/>
    <property type="evidence" value="ECO:0007669"/>
    <property type="project" value="RHEA"/>
</dbReference>
<dbReference type="GO" id="GO:0004674">
    <property type="term" value="F:protein serine/threonine kinase activity"/>
    <property type="evidence" value="ECO:0000314"/>
    <property type="project" value="MGI"/>
</dbReference>
<dbReference type="GO" id="GO:0006816">
    <property type="term" value="P:calcium ion transport"/>
    <property type="evidence" value="ECO:0000315"/>
    <property type="project" value="MGI"/>
</dbReference>
<dbReference type="GO" id="GO:0035458">
    <property type="term" value="P:cellular response to interferon-beta"/>
    <property type="evidence" value="ECO:0000250"/>
    <property type="project" value="UniProtKB"/>
</dbReference>
<dbReference type="GO" id="GO:0048813">
    <property type="term" value="P:dendrite morphogenesis"/>
    <property type="evidence" value="ECO:0000315"/>
    <property type="project" value="MGI"/>
</dbReference>
<dbReference type="GO" id="GO:0060996">
    <property type="term" value="P:dendritic spine development"/>
    <property type="evidence" value="ECO:0000250"/>
    <property type="project" value="UniProtKB"/>
</dbReference>
<dbReference type="GO" id="GO:0000082">
    <property type="term" value="P:G1/S transition of mitotic cell cycle"/>
    <property type="evidence" value="ECO:0000315"/>
    <property type="project" value="MGI"/>
</dbReference>
<dbReference type="GO" id="GO:0051346">
    <property type="term" value="P:negative regulation of hydrolase activity"/>
    <property type="evidence" value="ECO:0000315"/>
    <property type="project" value="UniProtKB"/>
</dbReference>
<dbReference type="GO" id="GO:1990443">
    <property type="term" value="P:peptidyl-threonine autophosphorylation"/>
    <property type="evidence" value="ECO:0000315"/>
    <property type="project" value="UniProtKB"/>
</dbReference>
<dbReference type="GO" id="GO:0051928">
    <property type="term" value="P:positive regulation of calcium ion transport"/>
    <property type="evidence" value="ECO:0000315"/>
    <property type="project" value="MGI"/>
</dbReference>
<dbReference type="GO" id="GO:0010666">
    <property type="term" value="P:positive regulation of cardiac muscle cell apoptotic process"/>
    <property type="evidence" value="ECO:0000315"/>
    <property type="project" value="MGI"/>
</dbReference>
<dbReference type="GO" id="GO:0046427">
    <property type="term" value="P:positive regulation of receptor signaling pathway via JAK-STAT"/>
    <property type="evidence" value="ECO:0000250"/>
    <property type="project" value="UniProtKB"/>
</dbReference>
<dbReference type="GO" id="GO:2000124">
    <property type="term" value="P:regulation of endocannabinoid signaling pathway"/>
    <property type="evidence" value="ECO:0000315"/>
    <property type="project" value="UniProtKB"/>
</dbReference>
<dbReference type="GO" id="GO:1902108">
    <property type="term" value="P:regulation of mitochondrial membrane permeability involved in apoptotic process"/>
    <property type="evidence" value="ECO:0000315"/>
    <property type="project" value="MGI"/>
</dbReference>
<dbReference type="GO" id="GO:2001222">
    <property type="term" value="P:regulation of neuron migration"/>
    <property type="evidence" value="ECO:0000250"/>
    <property type="project" value="UniProtKB"/>
</dbReference>
<dbReference type="GO" id="GO:0048168">
    <property type="term" value="P:regulation of neuronal synaptic plasticity"/>
    <property type="evidence" value="ECO:0000315"/>
    <property type="project" value="MGI"/>
</dbReference>
<dbReference type="GO" id="GO:0046928">
    <property type="term" value="P:regulation of neurotransmitter secretion"/>
    <property type="evidence" value="ECO:0000315"/>
    <property type="project" value="MGI"/>
</dbReference>
<dbReference type="GO" id="GO:0099148">
    <property type="term" value="P:regulation of synaptic vesicle docking"/>
    <property type="evidence" value="ECO:0000314"/>
    <property type="project" value="SynGO"/>
</dbReference>
<dbReference type="GO" id="GO:0002931">
    <property type="term" value="P:response to ischemia"/>
    <property type="evidence" value="ECO:0000315"/>
    <property type="project" value="MGI"/>
</dbReference>
<dbReference type="CDD" id="cd14086">
    <property type="entry name" value="STKc_CaMKII"/>
    <property type="match status" value="1"/>
</dbReference>
<dbReference type="FunFam" id="1.10.510.10:FF:000001">
    <property type="entry name" value="Calcium/calmodulin-dependent protein kinase type II subunit delta"/>
    <property type="match status" value="1"/>
</dbReference>
<dbReference type="FunFam" id="3.30.200.20:FF:000002">
    <property type="entry name" value="Calcium/calmodulin-dependent protein kinase type II subunit delta isoform 2"/>
    <property type="match status" value="1"/>
</dbReference>
<dbReference type="FunFam" id="3.10.450.50:FF:000001">
    <property type="entry name" value="calcium/calmodulin-dependent protein kinase type II subunit gamma isoform X1"/>
    <property type="match status" value="1"/>
</dbReference>
<dbReference type="Gene3D" id="3.10.450.50">
    <property type="match status" value="1"/>
</dbReference>
<dbReference type="Gene3D" id="6.10.140.620">
    <property type="match status" value="1"/>
</dbReference>
<dbReference type="Gene3D" id="3.30.200.20">
    <property type="entry name" value="Phosphorylase Kinase, domain 1"/>
    <property type="match status" value="1"/>
</dbReference>
<dbReference type="Gene3D" id="1.10.510.10">
    <property type="entry name" value="Transferase(Phosphotransferase) domain 1"/>
    <property type="match status" value="1"/>
</dbReference>
<dbReference type="InterPro" id="IPR013543">
    <property type="entry name" value="Ca/CaM-dep_prot_kinase-assoc"/>
</dbReference>
<dbReference type="InterPro" id="IPR011009">
    <property type="entry name" value="Kinase-like_dom_sf"/>
</dbReference>
<dbReference type="InterPro" id="IPR032710">
    <property type="entry name" value="NTF2-like_dom_sf"/>
</dbReference>
<dbReference type="InterPro" id="IPR000719">
    <property type="entry name" value="Prot_kinase_dom"/>
</dbReference>
<dbReference type="InterPro" id="IPR017441">
    <property type="entry name" value="Protein_kinase_ATP_BS"/>
</dbReference>
<dbReference type="InterPro" id="IPR008271">
    <property type="entry name" value="Ser/Thr_kinase_AS"/>
</dbReference>
<dbReference type="PANTHER" id="PTHR24347">
    <property type="entry name" value="SERINE/THREONINE-PROTEIN KINASE"/>
    <property type="match status" value="1"/>
</dbReference>
<dbReference type="Pfam" id="PF08332">
    <property type="entry name" value="CaMKII_AD"/>
    <property type="match status" value="1"/>
</dbReference>
<dbReference type="Pfam" id="PF00069">
    <property type="entry name" value="Pkinase"/>
    <property type="match status" value="1"/>
</dbReference>
<dbReference type="SMART" id="SM00220">
    <property type="entry name" value="S_TKc"/>
    <property type="match status" value="1"/>
</dbReference>
<dbReference type="SUPFAM" id="SSF54427">
    <property type="entry name" value="NTF2-like"/>
    <property type="match status" value="1"/>
</dbReference>
<dbReference type="SUPFAM" id="SSF56112">
    <property type="entry name" value="Protein kinase-like (PK-like)"/>
    <property type="match status" value="1"/>
</dbReference>
<dbReference type="PROSITE" id="PS00107">
    <property type="entry name" value="PROTEIN_KINASE_ATP"/>
    <property type="match status" value="1"/>
</dbReference>
<dbReference type="PROSITE" id="PS50011">
    <property type="entry name" value="PROTEIN_KINASE_DOM"/>
    <property type="match status" value="1"/>
</dbReference>
<dbReference type="PROSITE" id="PS00108">
    <property type="entry name" value="PROTEIN_KINASE_ST"/>
    <property type="match status" value="1"/>
</dbReference>
<gene>
    <name type="primary">Camk2a</name>
</gene>